<keyword id="KW-0418">Kinase</keyword>
<keyword id="KW-0547">Nucleotide-binding</keyword>
<keyword id="KW-0723">Serine/threonine-protein kinase</keyword>
<keyword id="KW-0808">Transferase</keyword>
<evidence type="ECO:0000255" key="1">
    <source>
        <dbReference type="HAMAP-Rule" id="MF_00921"/>
    </source>
</evidence>
<accession>Q11CM6</accession>
<organism>
    <name type="scientific">Chelativorans sp. (strain BNC1)</name>
    <dbReference type="NCBI Taxonomy" id="266779"/>
    <lineage>
        <taxon>Bacteria</taxon>
        <taxon>Pseudomonadati</taxon>
        <taxon>Pseudomonadota</taxon>
        <taxon>Alphaproteobacteria</taxon>
        <taxon>Hyphomicrobiales</taxon>
        <taxon>Phyllobacteriaceae</taxon>
        <taxon>Chelativorans</taxon>
    </lineage>
</organism>
<proteinExistence type="inferred from homology"/>
<name>PDRP_CHESB</name>
<protein>
    <recommendedName>
        <fullName evidence="1">Putative pyruvate, phosphate dikinase regulatory protein</fullName>
        <shortName evidence="1">PPDK regulatory protein</shortName>
        <ecNumber evidence="1">2.7.11.32</ecNumber>
        <ecNumber evidence="1">2.7.4.27</ecNumber>
    </recommendedName>
</protein>
<feature type="chain" id="PRO_0000316699" description="Putative pyruvate, phosphate dikinase regulatory protein">
    <location>
        <begin position="1"/>
        <end position="272"/>
    </location>
</feature>
<feature type="binding site" evidence="1">
    <location>
        <begin position="153"/>
        <end position="160"/>
    </location>
    <ligand>
        <name>ADP</name>
        <dbReference type="ChEBI" id="CHEBI:456216"/>
    </ligand>
</feature>
<dbReference type="EC" id="2.7.11.32" evidence="1"/>
<dbReference type="EC" id="2.7.4.27" evidence="1"/>
<dbReference type="EMBL" id="CP000390">
    <property type="protein sequence ID" value="ABG64849.1"/>
    <property type="molecule type" value="Genomic_DNA"/>
</dbReference>
<dbReference type="SMR" id="Q11CM6"/>
<dbReference type="STRING" id="266779.Meso_3478"/>
<dbReference type="KEGG" id="mes:Meso_3478"/>
<dbReference type="eggNOG" id="COG1806">
    <property type="taxonomic scope" value="Bacteria"/>
</dbReference>
<dbReference type="HOGENOM" id="CLU_046206_2_0_5"/>
<dbReference type="OrthoDB" id="9782201at2"/>
<dbReference type="GO" id="GO:0043531">
    <property type="term" value="F:ADP binding"/>
    <property type="evidence" value="ECO:0007669"/>
    <property type="project" value="UniProtKB-UniRule"/>
</dbReference>
<dbReference type="GO" id="GO:0005524">
    <property type="term" value="F:ATP binding"/>
    <property type="evidence" value="ECO:0007669"/>
    <property type="project" value="InterPro"/>
</dbReference>
<dbReference type="GO" id="GO:0016776">
    <property type="term" value="F:phosphotransferase activity, phosphate group as acceptor"/>
    <property type="evidence" value="ECO:0007669"/>
    <property type="project" value="UniProtKB-UniRule"/>
</dbReference>
<dbReference type="GO" id="GO:0004674">
    <property type="term" value="F:protein serine/threonine kinase activity"/>
    <property type="evidence" value="ECO:0007669"/>
    <property type="project" value="UniProtKB-UniRule"/>
</dbReference>
<dbReference type="HAMAP" id="MF_00921">
    <property type="entry name" value="PDRP"/>
    <property type="match status" value="1"/>
</dbReference>
<dbReference type="InterPro" id="IPR005177">
    <property type="entry name" value="Kinase-pyrophosphorylase"/>
</dbReference>
<dbReference type="InterPro" id="IPR026565">
    <property type="entry name" value="PPDK_reg"/>
</dbReference>
<dbReference type="NCBIfam" id="NF003742">
    <property type="entry name" value="PRK05339.1"/>
    <property type="match status" value="1"/>
</dbReference>
<dbReference type="PANTHER" id="PTHR31756">
    <property type="entry name" value="PYRUVATE, PHOSPHATE DIKINASE REGULATORY PROTEIN 1, CHLOROPLASTIC"/>
    <property type="match status" value="1"/>
</dbReference>
<dbReference type="PANTHER" id="PTHR31756:SF3">
    <property type="entry name" value="PYRUVATE, PHOSPHATE DIKINASE REGULATORY PROTEIN 1, CHLOROPLASTIC"/>
    <property type="match status" value="1"/>
</dbReference>
<dbReference type="Pfam" id="PF03618">
    <property type="entry name" value="Kinase-PPPase"/>
    <property type="match status" value="1"/>
</dbReference>
<sequence>MHKPQSFFHLHLISDATGETLLAAGRAAAAQYKNARAIEHIYPLVRTEKQLEKVFASIDEEPGIVLYTIVDQKLARQVDERCQAMGLPCVSVLEPVLAVFQSYLGTPAGRRVGAQHVLDAEYFRRIDALNFTMEHDDGQLPHNVEEADIVLVGVSRTSKTPTSIYLANRGIKTANVPIVLDAPLPEPLLNAKRPLVVGLIASAERISQVRQNRLLGASHVDFDAYVDRAEIARELAYARQLCNRHNWPVIDVTRRSIEETAAAILALRGKSW</sequence>
<comment type="function">
    <text evidence="1">Bifunctional serine/threonine kinase and phosphorylase involved in the regulation of the pyruvate, phosphate dikinase (PPDK) by catalyzing its phosphorylation/dephosphorylation.</text>
</comment>
<comment type="catalytic activity">
    <reaction evidence="1">
        <text>N(tele)-phospho-L-histidyl/L-threonyl-[pyruvate, phosphate dikinase] + ADP = N(tele)-phospho-L-histidyl/O-phospho-L-threonyl-[pyruvate, phosphate dikinase] + AMP + H(+)</text>
        <dbReference type="Rhea" id="RHEA:43692"/>
        <dbReference type="Rhea" id="RHEA-COMP:10650"/>
        <dbReference type="Rhea" id="RHEA-COMP:10651"/>
        <dbReference type="ChEBI" id="CHEBI:15378"/>
        <dbReference type="ChEBI" id="CHEBI:30013"/>
        <dbReference type="ChEBI" id="CHEBI:61977"/>
        <dbReference type="ChEBI" id="CHEBI:83586"/>
        <dbReference type="ChEBI" id="CHEBI:456215"/>
        <dbReference type="ChEBI" id="CHEBI:456216"/>
        <dbReference type="EC" id="2.7.11.32"/>
    </reaction>
</comment>
<comment type="catalytic activity">
    <reaction evidence="1">
        <text>N(tele)-phospho-L-histidyl/O-phospho-L-threonyl-[pyruvate, phosphate dikinase] + phosphate + H(+) = N(tele)-phospho-L-histidyl/L-threonyl-[pyruvate, phosphate dikinase] + diphosphate</text>
        <dbReference type="Rhea" id="RHEA:43696"/>
        <dbReference type="Rhea" id="RHEA-COMP:10650"/>
        <dbReference type="Rhea" id="RHEA-COMP:10651"/>
        <dbReference type="ChEBI" id="CHEBI:15378"/>
        <dbReference type="ChEBI" id="CHEBI:30013"/>
        <dbReference type="ChEBI" id="CHEBI:33019"/>
        <dbReference type="ChEBI" id="CHEBI:43474"/>
        <dbReference type="ChEBI" id="CHEBI:61977"/>
        <dbReference type="ChEBI" id="CHEBI:83586"/>
        <dbReference type="EC" id="2.7.4.27"/>
    </reaction>
</comment>
<comment type="similarity">
    <text evidence="1">Belongs to the pyruvate, phosphate/water dikinase regulatory protein family. PDRP subfamily.</text>
</comment>
<reference key="1">
    <citation type="submission" date="2006-06" db="EMBL/GenBank/DDBJ databases">
        <title>Complete sequence of chromosome of Mesorhizobium sp. BNC1.</title>
        <authorList>
            <consortium name="US DOE Joint Genome Institute"/>
            <person name="Copeland A."/>
            <person name="Lucas S."/>
            <person name="Lapidus A."/>
            <person name="Barry K."/>
            <person name="Detter J.C."/>
            <person name="Glavina del Rio T."/>
            <person name="Hammon N."/>
            <person name="Israni S."/>
            <person name="Dalin E."/>
            <person name="Tice H."/>
            <person name="Pitluck S."/>
            <person name="Chertkov O."/>
            <person name="Brettin T."/>
            <person name="Bruce D."/>
            <person name="Han C."/>
            <person name="Tapia R."/>
            <person name="Gilna P."/>
            <person name="Schmutz J."/>
            <person name="Larimer F."/>
            <person name="Land M."/>
            <person name="Hauser L."/>
            <person name="Kyrpides N."/>
            <person name="Mikhailova N."/>
            <person name="Richardson P."/>
        </authorList>
    </citation>
    <scope>NUCLEOTIDE SEQUENCE [LARGE SCALE GENOMIC DNA]</scope>
    <source>
        <strain>BNC1</strain>
    </source>
</reference>
<gene>
    <name type="ordered locus">Meso_3478</name>
</gene>